<dbReference type="EMBL" id="X02871">
    <property type="protein sequence ID" value="CAA26628.1"/>
    <property type="molecule type" value="Genomic_DNA"/>
</dbReference>
<dbReference type="EMBL" id="U00006">
    <property type="protein sequence ID" value="AAC43126.1"/>
    <property type="molecule type" value="Genomic_DNA"/>
</dbReference>
<dbReference type="EMBL" id="U00096">
    <property type="protein sequence ID" value="AAC77002.1"/>
    <property type="molecule type" value="Genomic_DNA"/>
</dbReference>
<dbReference type="EMBL" id="AP009048">
    <property type="protein sequence ID" value="BAE78034.1"/>
    <property type="molecule type" value="Genomic_DNA"/>
</dbReference>
<dbReference type="EMBL" id="J02812">
    <property type="protein sequence ID" value="AAA79015.1"/>
    <property type="molecule type" value="Genomic_DNA"/>
</dbReference>
<dbReference type="EMBL" id="X06663">
    <property type="protein sequence ID" value="CAA29861.1"/>
    <property type="molecule type" value="Genomic_DNA"/>
</dbReference>
<dbReference type="PIR" id="A24361">
    <property type="entry name" value="MMECMG"/>
</dbReference>
<dbReference type="RefSeq" id="NP_418456.1">
    <property type="nucleotide sequence ID" value="NC_000913.3"/>
</dbReference>
<dbReference type="RefSeq" id="WP_001252058.1">
    <property type="nucleotide sequence ID" value="NZ_STEB01000022.1"/>
</dbReference>
<dbReference type="PDB" id="2R6G">
    <property type="method" value="X-ray"/>
    <property type="resolution" value="2.80 A"/>
    <property type="chains" value="G=1-296"/>
</dbReference>
<dbReference type="PDB" id="3FH6">
    <property type="method" value="X-ray"/>
    <property type="resolution" value="4.50 A"/>
    <property type="chains" value="G/I=1-296"/>
</dbReference>
<dbReference type="PDB" id="3PUV">
    <property type="method" value="X-ray"/>
    <property type="resolution" value="2.40 A"/>
    <property type="chains" value="G=1-296"/>
</dbReference>
<dbReference type="PDB" id="3PUW">
    <property type="method" value="X-ray"/>
    <property type="resolution" value="2.30 A"/>
    <property type="chains" value="G=1-296"/>
</dbReference>
<dbReference type="PDB" id="3PUX">
    <property type="method" value="X-ray"/>
    <property type="resolution" value="2.30 A"/>
    <property type="chains" value="G=1-296"/>
</dbReference>
<dbReference type="PDB" id="3PUY">
    <property type="method" value="X-ray"/>
    <property type="resolution" value="3.10 A"/>
    <property type="chains" value="G=1-296"/>
</dbReference>
<dbReference type="PDB" id="3PUZ">
    <property type="method" value="X-ray"/>
    <property type="resolution" value="2.90 A"/>
    <property type="chains" value="G=1-296"/>
</dbReference>
<dbReference type="PDB" id="3PV0">
    <property type="method" value="X-ray"/>
    <property type="resolution" value="3.10 A"/>
    <property type="chains" value="G=1-296"/>
</dbReference>
<dbReference type="PDB" id="3RLF">
    <property type="method" value="X-ray"/>
    <property type="resolution" value="2.20 A"/>
    <property type="chains" value="G=1-296"/>
</dbReference>
<dbReference type="PDB" id="4JBW">
    <property type="method" value="X-ray"/>
    <property type="resolution" value="3.91 A"/>
    <property type="chains" value="G/I=1-296"/>
</dbReference>
<dbReference type="PDB" id="4KI0">
    <property type="method" value="X-ray"/>
    <property type="resolution" value="2.38 A"/>
    <property type="chains" value="G=1-296"/>
</dbReference>
<dbReference type="PDBsum" id="2R6G"/>
<dbReference type="PDBsum" id="3FH6"/>
<dbReference type="PDBsum" id="3PUV"/>
<dbReference type="PDBsum" id="3PUW"/>
<dbReference type="PDBsum" id="3PUX"/>
<dbReference type="PDBsum" id="3PUY"/>
<dbReference type="PDBsum" id="3PUZ"/>
<dbReference type="PDBsum" id="3PV0"/>
<dbReference type="PDBsum" id="3RLF"/>
<dbReference type="PDBsum" id="4JBW"/>
<dbReference type="PDBsum" id="4KI0"/>
<dbReference type="SMR" id="P68183"/>
<dbReference type="BioGRID" id="4262661">
    <property type="interactions" value="10"/>
</dbReference>
<dbReference type="ComplexPortal" id="CPX-1932">
    <property type="entry name" value="Maltose ABC transporter complex"/>
</dbReference>
<dbReference type="ComplexPortal" id="CPX-1978">
    <property type="entry name" value="Enzyme IIA-maltose transport inhibitory complex"/>
</dbReference>
<dbReference type="DIP" id="DIP-59709N"/>
<dbReference type="FunCoup" id="P68183">
    <property type="interactions" value="237"/>
</dbReference>
<dbReference type="IntAct" id="P68183">
    <property type="interactions" value="5"/>
</dbReference>
<dbReference type="STRING" id="511145.b4032"/>
<dbReference type="TCDB" id="3.A.1.1.1">
    <property type="family name" value="the atp-binding cassette (abc) superfamily"/>
</dbReference>
<dbReference type="PaxDb" id="511145-b4032"/>
<dbReference type="EnsemblBacteria" id="AAC77002">
    <property type="protein sequence ID" value="AAC77002"/>
    <property type="gene ID" value="b4032"/>
</dbReference>
<dbReference type="GeneID" id="86861565"/>
<dbReference type="GeneID" id="948530"/>
<dbReference type="KEGG" id="ecj:JW3992"/>
<dbReference type="KEGG" id="eco:b4032"/>
<dbReference type="KEGG" id="ecoc:C3026_21785"/>
<dbReference type="PATRIC" id="fig|1411691.4.peg.2679"/>
<dbReference type="EchoBASE" id="EB0551"/>
<dbReference type="eggNOG" id="COG3833">
    <property type="taxonomic scope" value="Bacteria"/>
</dbReference>
<dbReference type="HOGENOM" id="CLU_016047_1_2_6"/>
<dbReference type="InParanoid" id="P68183"/>
<dbReference type="OMA" id="QMFPIAV"/>
<dbReference type="OrthoDB" id="9794684at2"/>
<dbReference type="PhylomeDB" id="P68183"/>
<dbReference type="BioCyc" id="EcoCyc:MALG-MONOMER"/>
<dbReference type="BioCyc" id="MetaCyc:MALG-MONOMER"/>
<dbReference type="BRENDA" id="7.5.2.1">
    <property type="organism ID" value="2026"/>
</dbReference>
<dbReference type="EvolutionaryTrace" id="P68183"/>
<dbReference type="PRO" id="PR:P68183"/>
<dbReference type="Proteomes" id="UP000000625">
    <property type="component" value="Chromosome"/>
</dbReference>
<dbReference type="GO" id="GO:0043190">
    <property type="term" value="C:ATP-binding cassette (ABC) transporter complex"/>
    <property type="evidence" value="ECO:0000314"/>
    <property type="project" value="EcoCyc"/>
</dbReference>
<dbReference type="GO" id="GO:1990154">
    <property type="term" value="C:enzyme IIA-maltose transporter complex"/>
    <property type="evidence" value="ECO:0000353"/>
    <property type="project" value="ComplexPortal"/>
</dbReference>
<dbReference type="GO" id="GO:1990060">
    <property type="term" value="C:maltose transport complex"/>
    <property type="evidence" value="ECO:0000314"/>
    <property type="project" value="EcoCyc"/>
</dbReference>
<dbReference type="GO" id="GO:0016020">
    <property type="term" value="C:membrane"/>
    <property type="evidence" value="ECO:0000314"/>
    <property type="project" value="UniProtKB"/>
</dbReference>
<dbReference type="GO" id="GO:0005886">
    <property type="term" value="C:plasma membrane"/>
    <property type="evidence" value="ECO:0000314"/>
    <property type="project" value="EcoCyc"/>
</dbReference>
<dbReference type="GO" id="GO:0015423">
    <property type="term" value="F:ABC-type maltose transporter activity"/>
    <property type="evidence" value="ECO:0000314"/>
    <property type="project" value="EcoCyc"/>
</dbReference>
<dbReference type="GO" id="GO:0042956">
    <property type="term" value="P:maltodextrin transmembrane transport"/>
    <property type="evidence" value="ECO:0000314"/>
    <property type="project" value="ComplexPortal"/>
</dbReference>
<dbReference type="GO" id="GO:0015768">
    <property type="term" value="P:maltose transport"/>
    <property type="evidence" value="ECO:0000314"/>
    <property type="project" value="EcoCyc"/>
</dbReference>
<dbReference type="GO" id="GO:1902344">
    <property type="term" value="P:negative regulation of maltose transport"/>
    <property type="evidence" value="ECO:0000303"/>
    <property type="project" value="ComplexPortal"/>
</dbReference>
<dbReference type="GO" id="GO:0034763">
    <property type="term" value="P:negative regulation of transmembrane transport"/>
    <property type="evidence" value="ECO:0000303"/>
    <property type="project" value="ComplexPortal"/>
</dbReference>
<dbReference type="CDD" id="cd06261">
    <property type="entry name" value="TM_PBP2"/>
    <property type="match status" value="1"/>
</dbReference>
<dbReference type="FunFam" id="1.10.3720.10:FF:000010">
    <property type="entry name" value="Maltose ABC transporter permease MalG"/>
    <property type="match status" value="1"/>
</dbReference>
<dbReference type="Gene3D" id="1.10.3720.10">
    <property type="entry name" value="MetI-like"/>
    <property type="match status" value="1"/>
</dbReference>
<dbReference type="InterPro" id="IPR050901">
    <property type="entry name" value="BP-dep_ABC_trans_perm"/>
</dbReference>
<dbReference type="InterPro" id="IPR000515">
    <property type="entry name" value="MetI-like"/>
</dbReference>
<dbReference type="InterPro" id="IPR035906">
    <property type="entry name" value="MetI-like_sf"/>
</dbReference>
<dbReference type="NCBIfam" id="NF008231">
    <property type="entry name" value="PRK10998.1"/>
    <property type="match status" value="1"/>
</dbReference>
<dbReference type="PANTHER" id="PTHR32243">
    <property type="entry name" value="MALTOSE TRANSPORT SYSTEM PERMEASE-RELATED"/>
    <property type="match status" value="1"/>
</dbReference>
<dbReference type="PANTHER" id="PTHR32243:SF50">
    <property type="entry name" value="MALTOSE_MALTODEXTRIN TRANSPORT SYSTEM PERMEASE PROTEIN MALG"/>
    <property type="match status" value="1"/>
</dbReference>
<dbReference type="Pfam" id="PF00528">
    <property type="entry name" value="BPD_transp_1"/>
    <property type="match status" value="1"/>
</dbReference>
<dbReference type="SUPFAM" id="SSF161098">
    <property type="entry name" value="MetI-like"/>
    <property type="match status" value="1"/>
</dbReference>
<dbReference type="PROSITE" id="PS50928">
    <property type="entry name" value="ABC_TM1"/>
    <property type="match status" value="1"/>
</dbReference>
<name>MALG_ECOLI</name>
<proteinExistence type="evidence at protein level"/>
<feature type="chain" id="PRO_0000060081" description="Maltose/maltodextrin transport system permease protein MalG">
    <location>
        <begin position="1"/>
        <end position="296"/>
    </location>
</feature>
<feature type="topological domain" description="Cytoplasmic" evidence="9">
    <location>
        <begin position="1"/>
        <end position="18"/>
    </location>
</feature>
<feature type="transmembrane region" description="Helical" evidence="9">
    <location>
        <begin position="19"/>
        <end position="39"/>
    </location>
</feature>
<feature type="topological domain" description="Periplasmic" evidence="9">
    <location>
        <begin position="40"/>
        <end position="81"/>
    </location>
</feature>
<feature type="transmembrane region" description="Helical" evidence="9">
    <location>
        <begin position="82"/>
        <end position="102"/>
    </location>
</feature>
<feature type="topological domain" description="Cytoplasmic" evidence="9">
    <location>
        <begin position="103"/>
        <end position="123"/>
    </location>
</feature>
<feature type="transmembrane region" description="Helical" evidence="9">
    <location>
        <begin position="124"/>
        <end position="144"/>
    </location>
</feature>
<feature type="topological domain" description="Periplasmic" evidence="9">
    <location>
        <begin position="145"/>
        <end position="150"/>
    </location>
</feature>
<feature type="transmembrane region" description="Helical" evidence="9">
    <location>
        <begin position="151"/>
        <end position="171"/>
    </location>
</feature>
<feature type="topological domain" description="Cytoplasmic" evidence="9">
    <location>
        <begin position="172"/>
        <end position="204"/>
    </location>
</feature>
<feature type="transmembrane region" description="Helical" evidence="9">
    <location>
        <begin position="205"/>
        <end position="225"/>
    </location>
</feature>
<feature type="topological domain" description="Periplasmic" evidence="9">
    <location>
        <begin position="226"/>
        <end position="259"/>
    </location>
</feature>
<feature type="transmembrane region" description="Helical" evidence="9">
    <location>
        <begin position="260"/>
        <end position="280"/>
    </location>
</feature>
<feature type="topological domain" description="Cytoplasmic" evidence="9">
    <location>
        <begin position="281"/>
        <end position="296"/>
    </location>
</feature>
<feature type="domain" description="ABC transmembrane type-1" evidence="1">
    <location>
        <begin position="85"/>
        <end position="281"/>
    </location>
</feature>
<feature type="mutagenesis site" description="Reduction of transport rate." evidence="2 7">
    <original>E</original>
    <variation>A</variation>
    <variation>C</variation>
    <variation>K</variation>
    <variation>L</variation>
    <location>
        <position position="190"/>
    </location>
</feature>
<feature type="mutagenesis site" description="Loss of transport and MalK dissociation from the membrane." evidence="2 7">
    <original>A</original>
    <variation>D</variation>
    <variation>S</variation>
    <variation>L</variation>
    <location>
        <position position="192"/>
    </location>
</feature>
<feature type="mutagenesis site" description="No effect." evidence="2 7">
    <original>G</original>
    <variation>A</variation>
    <location>
        <position position="196"/>
    </location>
</feature>
<feature type="mutagenesis site" description="Loss of transport and MalK dissociation from the membrane." evidence="2 7">
    <original>G</original>
    <variation>P</variation>
    <location>
        <position position="196"/>
    </location>
</feature>
<feature type="mutagenesis site" description="No effect." evidence="7">
    <original>P</original>
    <variation>A</variation>
    <location>
        <position position="209"/>
    </location>
</feature>
<feature type="turn" evidence="11">
    <location>
        <begin position="7"/>
        <end position="9"/>
    </location>
</feature>
<feature type="helix" evidence="13">
    <location>
        <begin position="12"/>
        <end position="38"/>
    </location>
</feature>
<feature type="strand" evidence="13">
    <location>
        <begin position="40"/>
        <end position="42"/>
    </location>
</feature>
<feature type="strand" evidence="13">
    <location>
        <begin position="52"/>
        <end position="54"/>
    </location>
</feature>
<feature type="helix" evidence="13">
    <location>
        <begin position="57"/>
        <end position="62"/>
    </location>
</feature>
<feature type="strand" evidence="12">
    <location>
        <begin position="67"/>
        <end position="69"/>
    </location>
</feature>
<feature type="strand" evidence="11">
    <location>
        <begin position="70"/>
        <end position="75"/>
    </location>
</feature>
<feature type="helix" evidence="13">
    <location>
        <begin position="81"/>
        <end position="112"/>
    </location>
</feature>
<feature type="helix" evidence="13">
    <location>
        <begin position="118"/>
        <end position="129"/>
    </location>
</feature>
<feature type="strand" evidence="10">
    <location>
        <begin position="133"/>
        <end position="135"/>
    </location>
</feature>
<feature type="helix" evidence="13">
    <location>
        <begin position="136"/>
        <end position="148"/>
    </location>
</feature>
<feature type="helix" evidence="13">
    <location>
        <begin position="152"/>
        <end position="154"/>
    </location>
</feature>
<feature type="strand" evidence="14">
    <location>
        <begin position="155"/>
        <end position="157"/>
    </location>
</feature>
<feature type="helix" evidence="13">
    <location>
        <begin position="159"/>
        <end position="166"/>
    </location>
</feature>
<feature type="turn" evidence="10">
    <location>
        <begin position="167"/>
        <end position="170"/>
    </location>
</feature>
<feature type="helix" evidence="13">
    <location>
        <begin position="171"/>
        <end position="181"/>
    </location>
</feature>
<feature type="helix" evidence="13">
    <location>
        <begin position="187"/>
        <end position="194"/>
    </location>
</feature>
<feature type="helix" evidence="13">
    <location>
        <begin position="199"/>
        <end position="205"/>
    </location>
</feature>
<feature type="helix" evidence="13">
    <location>
        <begin position="207"/>
        <end position="227"/>
    </location>
</feature>
<feature type="helix" evidence="13">
    <location>
        <begin position="231"/>
        <end position="236"/>
    </location>
</feature>
<feature type="helix" evidence="13">
    <location>
        <begin position="240"/>
        <end position="242"/>
    </location>
</feature>
<feature type="helix" evidence="13">
    <location>
        <begin position="245"/>
        <end position="248"/>
    </location>
</feature>
<feature type="helix" evidence="13">
    <location>
        <begin position="249"/>
        <end position="252"/>
    </location>
</feature>
<feature type="helix" evidence="13">
    <location>
        <begin position="260"/>
        <end position="280"/>
    </location>
</feature>
<feature type="helix" evidence="13">
    <location>
        <begin position="281"/>
        <end position="283"/>
    </location>
</feature>
<feature type="turn" evidence="13">
    <location>
        <begin position="289"/>
        <end position="293"/>
    </location>
</feature>
<evidence type="ECO:0000255" key="1">
    <source>
        <dbReference type="PROSITE-ProRule" id="PRU00441"/>
    </source>
</evidence>
<evidence type="ECO:0000269" key="2">
    <source>
    </source>
</evidence>
<evidence type="ECO:0000269" key="3">
    <source>
    </source>
</evidence>
<evidence type="ECO:0000269" key="4">
    <source>
    </source>
</evidence>
<evidence type="ECO:0000269" key="5">
    <source>
    </source>
</evidence>
<evidence type="ECO:0000269" key="6">
    <source>
    </source>
</evidence>
<evidence type="ECO:0000269" key="7">
    <source>
    </source>
</evidence>
<evidence type="ECO:0000303" key="8">
    <source>
    </source>
</evidence>
<evidence type="ECO:0000305" key="9"/>
<evidence type="ECO:0007829" key="10">
    <source>
        <dbReference type="PDB" id="2R6G"/>
    </source>
</evidence>
<evidence type="ECO:0007829" key="11">
    <source>
        <dbReference type="PDB" id="3PUZ"/>
    </source>
</evidence>
<evidence type="ECO:0007829" key="12">
    <source>
        <dbReference type="PDB" id="3PV0"/>
    </source>
</evidence>
<evidence type="ECO:0007829" key="13">
    <source>
        <dbReference type="PDB" id="3RLF"/>
    </source>
</evidence>
<evidence type="ECO:0007829" key="14">
    <source>
        <dbReference type="PDB" id="4KI0"/>
    </source>
</evidence>
<gene>
    <name evidence="8" type="primary">malG</name>
    <name type="ordered locus">b4032</name>
    <name type="ordered locus">JW3992</name>
</gene>
<keyword id="KW-0002">3D-structure</keyword>
<keyword id="KW-0997">Cell inner membrane</keyword>
<keyword id="KW-1003">Cell membrane</keyword>
<keyword id="KW-0472">Membrane</keyword>
<keyword id="KW-1185">Reference proteome</keyword>
<keyword id="KW-0762">Sugar transport</keyword>
<keyword id="KW-0812">Transmembrane</keyword>
<keyword id="KW-1133">Transmembrane helix</keyword>
<keyword id="KW-0813">Transport</keyword>
<reference key="1">
    <citation type="journal article" date="1985" name="EMBO J.">
        <title>Sequence of gene malG in E. coli K12: homologies between integral membrane components from binding protein-dependent transport systems.</title>
        <authorList>
            <person name="Dassa E."/>
            <person name="Hofnung M."/>
        </authorList>
    </citation>
    <scope>NUCLEOTIDE SEQUENCE [GENOMIC DNA]</scope>
    <source>
        <strain>K12</strain>
    </source>
</reference>
<reference key="2">
    <citation type="journal article" date="1993" name="Nucleic Acids Res.">
        <title>Analysis of the Escherichia coli genome. IV. DNA sequence of the region from 89.2 to 92.8 minutes.</title>
        <authorList>
            <person name="Blattner F.R."/>
            <person name="Burland V.D."/>
            <person name="Plunkett G. III"/>
            <person name="Sofia H.J."/>
            <person name="Daniels D.L."/>
        </authorList>
    </citation>
    <scope>NUCLEOTIDE SEQUENCE [LARGE SCALE GENOMIC DNA]</scope>
    <source>
        <strain>K12 / MG1655 / ATCC 47076</strain>
    </source>
</reference>
<reference key="3">
    <citation type="journal article" date="1997" name="Science">
        <title>The complete genome sequence of Escherichia coli K-12.</title>
        <authorList>
            <person name="Blattner F.R."/>
            <person name="Plunkett G. III"/>
            <person name="Bloch C.A."/>
            <person name="Perna N.T."/>
            <person name="Burland V."/>
            <person name="Riley M."/>
            <person name="Collado-Vides J."/>
            <person name="Glasner J.D."/>
            <person name="Rode C.K."/>
            <person name="Mayhew G.F."/>
            <person name="Gregor J."/>
            <person name="Davis N.W."/>
            <person name="Kirkpatrick H.A."/>
            <person name="Goeden M.A."/>
            <person name="Rose D.J."/>
            <person name="Mau B."/>
            <person name="Shao Y."/>
        </authorList>
    </citation>
    <scope>NUCLEOTIDE SEQUENCE [LARGE SCALE GENOMIC DNA]</scope>
    <source>
        <strain>K12 / MG1655 / ATCC 47076</strain>
    </source>
</reference>
<reference key="4">
    <citation type="journal article" date="2006" name="Mol. Syst. Biol.">
        <title>Highly accurate genome sequences of Escherichia coli K-12 strains MG1655 and W3110.</title>
        <authorList>
            <person name="Hayashi K."/>
            <person name="Morooka N."/>
            <person name="Yamamoto Y."/>
            <person name="Fujita K."/>
            <person name="Isono K."/>
            <person name="Choi S."/>
            <person name="Ohtsubo E."/>
            <person name="Baba T."/>
            <person name="Wanner B.L."/>
            <person name="Mori H."/>
            <person name="Horiuchi T."/>
        </authorList>
    </citation>
    <scope>NUCLEOTIDE SEQUENCE [LARGE SCALE GENOMIC DNA]</scope>
    <source>
        <strain>K12 / W3110 / ATCC 27325 / DSM 5911</strain>
    </source>
</reference>
<reference key="5">
    <citation type="journal article" date="1987" name="J. Biol. Chem.">
        <title>The cloning and DNA sequence of the gene xylE for xylose-proton symport in Escherichia coli K12.</title>
        <authorList>
            <person name="Davis E.O."/>
            <person name="Henderson P.J.F."/>
        </authorList>
    </citation>
    <scope>NUCLEOTIDE SEQUENCE [GENOMIC DNA] OF 287-296</scope>
    <source>
        <strain>K12</strain>
    </source>
</reference>
<reference key="6">
    <citation type="journal article" date="1988" name="Nucleic Acids Res.">
        <title>3' end of the malEFG operon in E.coli: localization of the transcription termination site.</title>
        <authorList>
            <person name="Francoz E."/>
            <person name="Dassa E."/>
        </authorList>
    </citation>
    <scope>NUCLEOTIDE SEQUENCE [GENOMIC DNA] OF 287-296</scope>
    <source>
        <strain>K12</strain>
    </source>
</reference>
<reference key="7">
    <citation type="journal article" date="1990" name="J. Biol. Chem.">
        <title>Overproduction, solubilization, and reconstitution of the maltose transport system from Escherichia coli.</title>
        <authorList>
            <person name="Davidson A.L."/>
            <person name="Nikaido H."/>
        </authorList>
    </citation>
    <scope>FUNCTION</scope>
    <scope>SUBUNIT</scope>
    <source>
        <strain>K12</strain>
    </source>
</reference>
<reference key="8">
    <citation type="journal article" date="1990" name="Mol. Gen. Genet.">
        <title>Cellular localization of the MalG protein from the maltose transport system in Escherichia coli K12.</title>
        <authorList>
            <person name="Dassa E."/>
        </authorList>
    </citation>
    <scope>SUBCELLULAR LOCATION</scope>
    <source>
        <strain>K12</strain>
    </source>
</reference>
<reference key="9">
    <citation type="journal article" date="1991" name="J. Biol. Chem.">
        <title>Purification and characterization of the membrane-associated components of the maltose transport system from Escherichia coli.</title>
        <authorList>
            <person name="Davidson A.L."/>
            <person name="Nikaido H."/>
        </authorList>
    </citation>
    <scope>FUNCTION</scope>
    <scope>SUBUNIT</scope>
</reference>
<reference key="10">
    <citation type="journal article" date="1993" name="Mol. Microbiol.">
        <title>Membrane topology of MalG, an inner membrane protein from the maltose transport system of Escherichia coli.</title>
        <authorList>
            <person name="Dassa E."/>
            <person name="Muir S."/>
        </authorList>
    </citation>
    <scope>TOPOLOGY</scope>
</reference>
<reference key="11">
    <citation type="journal article" date="1993" name="Mol. Microbiol.">
        <title>Sequence-function relationships in MalG, an inner membrane protein from the maltose transport system in Escherichia coli.</title>
        <authorList>
            <person name="Dassa E."/>
        </authorList>
    </citation>
    <scope>MUTAGENESIS</scope>
    <scope>CHARACTERIZATION</scope>
</reference>
<reference key="12">
    <citation type="journal article" date="1997" name="EMBO J.">
        <title>Subunit interactions in ABC transporters: a conserved sequence in hydrophobic membrane proteins of periplasmic permeases defines an important site of interaction with the ATPase subunits.</title>
        <authorList>
            <person name="Mourez M."/>
            <person name="Hofnung M."/>
            <person name="Dassa E."/>
        </authorList>
    </citation>
    <scope>MUTAGENESIS OF GLU-190; ALA-192; GLY-196 AND PRO-209</scope>
</reference>
<reference key="13">
    <citation type="journal article" date="2000" name="J. Biol. Chem.">
        <title>ATP modulates subunit-subunit interactions in an ATP-binding cassette transporter (MalFGK2) determined by site-directed chemical cross-linking.</title>
        <authorList>
            <person name="Hunke S."/>
            <person name="Mourez M."/>
            <person name="Jehanno M."/>
            <person name="Dassa E."/>
            <person name="Schneider E."/>
        </authorList>
    </citation>
    <scope>SUBUNIT INTERACTION</scope>
    <scope>MUTAGENESIS OF GLU-190; ALA-192 AND GLY-196</scope>
</reference>
<reference key="14">
    <citation type="journal article" date="2008" name="J. Biol. Chem.">
        <title>Biogenesis of MalF and the MalFGK(2) maltose transport complex in Escherichia coli requires YidC.</title>
        <authorList>
            <person name="Wagner S."/>
            <person name="Pop O.I."/>
            <person name="Haan G.J."/>
            <person name="Baars L."/>
            <person name="Koningstein G."/>
            <person name="Klepsch M.M."/>
            <person name="Genevaux P."/>
            <person name="Luirink J."/>
            <person name="de Gier J.W."/>
        </authorList>
    </citation>
    <scope>SUBUNIT</scope>
    <scope>SUBCELLULAR LOCATION</scope>
    <scope>REQUIREMENT FOR YIDC FOR PROTEIN AND COMPLEX FORMATION</scope>
</reference>
<reference key="15">
    <citation type="journal article" date="1998" name="Microbiol. Mol. Biol. Rev.">
        <title>Maltose/maltodextrin system of Escherichia coli: transport, metabolism, and regulation.</title>
        <authorList>
            <person name="Boos W."/>
            <person name="Shuman H."/>
        </authorList>
    </citation>
    <scope>REVIEW</scope>
</reference>
<reference key="16">
    <citation type="journal article" date="2005" name="Science">
        <title>Global topology analysis of the Escherichia coli inner membrane proteome.</title>
        <authorList>
            <person name="Daley D.O."/>
            <person name="Rapp M."/>
            <person name="Granseth E."/>
            <person name="Melen K."/>
            <person name="Drew D."/>
            <person name="von Heijne G."/>
        </authorList>
    </citation>
    <scope>TOPOLOGY [LARGE SCALE ANALYSIS]</scope>
    <source>
        <strain>K12 / MG1655 / ATCC 47076</strain>
    </source>
</reference>
<sequence>MAMVQPKSQKARLFITHLLLLLFIAAIMFPLLMVVAISLRQGNFATGSLIPEQISWDHWKLALGFSVEQADGRITPPPFPVLLWLWNSVKVAGISAIGIVALSTTCAYAFARMRFPGKATLLKGMLIFQMFPAVLSLVALYALFDRLGEYIPFIGLNTHGGVIFAYLGGIALHVWTIKGYFETIDSSLEEAAALDGATPWQAFRLVLLPLSVPILAVVFILSFIAAITEVPVASLLLRDVNSYTLAVGMQQYLNPQNYLWGDFAAAAVMSALPITIVFLLAQRWLVNGLTAGGVKG</sequence>
<comment type="function">
    <text evidence="4 5">Part of the ABC transporter complex MalEFGK involved in maltose/maltodextrin import. Probably responsible for the translocation of the substrate across the membrane.</text>
</comment>
<comment type="subunit">
    <text evidence="2 3 4 5">The complex is composed of two ATP-binding proteins (MalK), two transmembrane proteins (MalG and MalF) and a solute-binding protein (MalE). Protein stability and stable complex formation require YidC.</text>
</comment>
<comment type="interaction">
    <interactant intactId="EBI-6400985">
        <id>P68183</id>
    </interactant>
    <interactant intactId="EBI-1118919">
        <id>P02916</id>
        <label>malF</label>
    </interactant>
    <organismsDiffer>false</organismsDiffer>
    <experiments>5</experiments>
</comment>
<comment type="subcellular location">
    <subcellularLocation>
        <location evidence="3 6">Cell inner membrane</location>
        <topology evidence="1 3 6">Multi-pass membrane protein</topology>
    </subcellularLocation>
</comment>
<comment type="miscellaneous">
    <text>When MalF EAA loop mutations are made concomitantly with MalG EAA loop mutations, a complete loss of transport and complex formation is observed. This suggests that the MalF-MalG interaction may be important for the proper assembly and also for the correct function of the transporter.</text>
</comment>
<comment type="similarity">
    <text evidence="9">Belongs to the binding-protein-dependent transport system permease family. MalFG subfamily.</text>
</comment>
<accession>P68183</accession>
<accession>P07622</accession>
<accession>Q2M6S2</accession>
<protein>
    <recommendedName>
        <fullName evidence="9">Maltose/maltodextrin transport system permease protein MalG</fullName>
    </recommendedName>
</protein>
<organism>
    <name type="scientific">Escherichia coli (strain K12)</name>
    <dbReference type="NCBI Taxonomy" id="83333"/>
    <lineage>
        <taxon>Bacteria</taxon>
        <taxon>Pseudomonadati</taxon>
        <taxon>Pseudomonadota</taxon>
        <taxon>Gammaproteobacteria</taxon>
        <taxon>Enterobacterales</taxon>
        <taxon>Enterobacteriaceae</taxon>
        <taxon>Escherichia</taxon>
    </lineage>
</organism>